<dbReference type="EMBL" id="CP000708">
    <property type="protein sequence ID" value="ABQ61474.1"/>
    <property type="molecule type" value="Genomic_DNA"/>
</dbReference>
<dbReference type="RefSeq" id="WP_006013613.1">
    <property type="nucleotide sequence ID" value="NC_009505.1"/>
</dbReference>
<dbReference type="SMR" id="A5VS65"/>
<dbReference type="GeneID" id="45125012"/>
<dbReference type="KEGG" id="bov:BOV_1652"/>
<dbReference type="HOGENOM" id="CLU_074944_1_1_5"/>
<dbReference type="PhylomeDB" id="A5VS65"/>
<dbReference type="UniPathway" id="UPA00345"/>
<dbReference type="Proteomes" id="UP000006383">
    <property type="component" value="Chromosome I"/>
</dbReference>
<dbReference type="GO" id="GO:0005737">
    <property type="term" value="C:cytoplasm"/>
    <property type="evidence" value="ECO:0007669"/>
    <property type="project" value="UniProtKB-SubCell"/>
</dbReference>
<dbReference type="GO" id="GO:0003746">
    <property type="term" value="F:translation elongation factor activity"/>
    <property type="evidence" value="ECO:0007669"/>
    <property type="project" value="UniProtKB-UniRule"/>
</dbReference>
<dbReference type="GO" id="GO:0043043">
    <property type="term" value="P:peptide biosynthetic process"/>
    <property type="evidence" value="ECO:0007669"/>
    <property type="project" value="InterPro"/>
</dbReference>
<dbReference type="CDD" id="cd04470">
    <property type="entry name" value="S1_EF-P_repeat_1"/>
    <property type="match status" value="1"/>
</dbReference>
<dbReference type="CDD" id="cd05794">
    <property type="entry name" value="S1_EF-P_repeat_2"/>
    <property type="match status" value="1"/>
</dbReference>
<dbReference type="FunFam" id="2.30.30.30:FF:000003">
    <property type="entry name" value="Elongation factor P"/>
    <property type="match status" value="1"/>
</dbReference>
<dbReference type="FunFam" id="2.40.50.140:FF:000004">
    <property type="entry name" value="Elongation factor P"/>
    <property type="match status" value="1"/>
</dbReference>
<dbReference type="FunFam" id="2.40.50.140:FF:000009">
    <property type="entry name" value="Elongation factor P"/>
    <property type="match status" value="1"/>
</dbReference>
<dbReference type="Gene3D" id="2.30.30.30">
    <property type="match status" value="1"/>
</dbReference>
<dbReference type="Gene3D" id="2.40.50.140">
    <property type="entry name" value="Nucleic acid-binding proteins"/>
    <property type="match status" value="2"/>
</dbReference>
<dbReference type="HAMAP" id="MF_00141">
    <property type="entry name" value="EF_P"/>
    <property type="match status" value="1"/>
</dbReference>
<dbReference type="InterPro" id="IPR015365">
    <property type="entry name" value="Elong-fact-P_C"/>
</dbReference>
<dbReference type="InterPro" id="IPR012340">
    <property type="entry name" value="NA-bd_OB-fold"/>
</dbReference>
<dbReference type="InterPro" id="IPR014722">
    <property type="entry name" value="Rib_uL2_dom2"/>
</dbReference>
<dbReference type="InterPro" id="IPR020599">
    <property type="entry name" value="Transl_elong_fac_P/YeiP"/>
</dbReference>
<dbReference type="InterPro" id="IPR013185">
    <property type="entry name" value="Transl_elong_KOW-like"/>
</dbReference>
<dbReference type="InterPro" id="IPR001059">
    <property type="entry name" value="Transl_elong_P/YeiP_cen"/>
</dbReference>
<dbReference type="InterPro" id="IPR013852">
    <property type="entry name" value="Transl_elong_P/YeiP_CS"/>
</dbReference>
<dbReference type="InterPro" id="IPR011768">
    <property type="entry name" value="Transl_elongation_fac_P"/>
</dbReference>
<dbReference type="InterPro" id="IPR008991">
    <property type="entry name" value="Translation_prot_SH3-like_sf"/>
</dbReference>
<dbReference type="NCBIfam" id="TIGR00038">
    <property type="entry name" value="efp"/>
    <property type="match status" value="1"/>
</dbReference>
<dbReference type="NCBIfam" id="NF001810">
    <property type="entry name" value="PRK00529.1"/>
    <property type="match status" value="1"/>
</dbReference>
<dbReference type="PANTHER" id="PTHR30053">
    <property type="entry name" value="ELONGATION FACTOR P"/>
    <property type="match status" value="1"/>
</dbReference>
<dbReference type="PANTHER" id="PTHR30053:SF14">
    <property type="entry name" value="TRANSLATION ELONGATION FACTOR KOW-LIKE DOMAIN-CONTAINING PROTEIN"/>
    <property type="match status" value="1"/>
</dbReference>
<dbReference type="Pfam" id="PF01132">
    <property type="entry name" value="EFP"/>
    <property type="match status" value="1"/>
</dbReference>
<dbReference type="Pfam" id="PF08207">
    <property type="entry name" value="EFP_N"/>
    <property type="match status" value="1"/>
</dbReference>
<dbReference type="Pfam" id="PF09285">
    <property type="entry name" value="Elong-fact-P_C"/>
    <property type="match status" value="1"/>
</dbReference>
<dbReference type="PIRSF" id="PIRSF005901">
    <property type="entry name" value="EF-P"/>
    <property type="match status" value="1"/>
</dbReference>
<dbReference type="SMART" id="SM01185">
    <property type="entry name" value="EFP"/>
    <property type="match status" value="1"/>
</dbReference>
<dbReference type="SMART" id="SM00841">
    <property type="entry name" value="Elong-fact-P_C"/>
    <property type="match status" value="1"/>
</dbReference>
<dbReference type="SUPFAM" id="SSF50249">
    <property type="entry name" value="Nucleic acid-binding proteins"/>
    <property type="match status" value="2"/>
</dbReference>
<dbReference type="SUPFAM" id="SSF50104">
    <property type="entry name" value="Translation proteins SH3-like domain"/>
    <property type="match status" value="1"/>
</dbReference>
<dbReference type="PROSITE" id="PS01275">
    <property type="entry name" value="EFP"/>
    <property type="match status" value="1"/>
</dbReference>
<feature type="chain" id="PRO_1000010693" description="Elongation factor P">
    <location>
        <begin position="1"/>
        <end position="186"/>
    </location>
</feature>
<comment type="function">
    <text evidence="1">Involved in peptide bond synthesis. Stimulates efficient translation and peptide-bond synthesis on native or reconstituted 70S ribosomes in vitro. Probably functions indirectly by altering the affinity of the ribosome for aminoacyl-tRNA, thus increasing their reactivity as acceptors for peptidyl transferase.</text>
</comment>
<comment type="pathway">
    <text evidence="1">Protein biosynthesis; polypeptide chain elongation.</text>
</comment>
<comment type="subcellular location">
    <subcellularLocation>
        <location evidence="1">Cytoplasm</location>
    </subcellularLocation>
</comment>
<comment type="similarity">
    <text evidence="1">Belongs to the elongation factor P family.</text>
</comment>
<name>EFP_BRUO2</name>
<reference key="1">
    <citation type="journal article" date="2009" name="PLoS ONE">
        <title>Genome degradation in Brucella ovis corresponds with narrowing of its host range and tissue tropism.</title>
        <authorList>
            <person name="Tsolis R.M."/>
            <person name="Seshadri R."/>
            <person name="Santos R.L."/>
            <person name="Sangari F.J."/>
            <person name="Lobo J.M."/>
            <person name="de Jong M.F."/>
            <person name="Ren Q."/>
            <person name="Myers G."/>
            <person name="Brinkac L.M."/>
            <person name="Nelson W.C."/>
            <person name="Deboy R.T."/>
            <person name="Angiuoli S."/>
            <person name="Khouri H."/>
            <person name="Dimitrov G."/>
            <person name="Robinson J.R."/>
            <person name="Mulligan S."/>
            <person name="Walker R.L."/>
            <person name="Elzer P.E."/>
            <person name="Hassan K.A."/>
            <person name="Paulsen I.T."/>
        </authorList>
    </citation>
    <scope>NUCLEOTIDE SEQUENCE [LARGE SCALE GENOMIC DNA]</scope>
    <source>
        <strain>ATCC 25840 / 63/290 / NCTC 10512</strain>
    </source>
</reference>
<proteinExistence type="inferred from homology"/>
<sequence length="186" mass="20744">MKINGNEIRPGNVIEHEGGLWVAVKTNAVKPGKGGAYNQVELKNLINGTKLNERFRAAETVERVRLEQKDFSFLYEQGEALIFMDTETYEQLELQKDFVGDRAAFLQDGMMVTVELYEEKPIGIRLPDQVTLAITEADPVVKGQTAASSYKPAVLENGIRIPVPPFITSGERVIVDTNELTYISRA</sequence>
<evidence type="ECO:0000255" key="1">
    <source>
        <dbReference type="HAMAP-Rule" id="MF_00141"/>
    </source>
</evidence>
<gene>
    <name evidence="1" type="primary">efp</name>
    <name type="ordered locus">BOV_1652</name>
</gene>
<accession>A5VS65</accession>
<protein>
    <recommendedName>
        <fullName evidence="1">Elongation factor P</fullName>
        <shortName evidence="1">EF-P</shortName>
    </recommendedName>
</protein>
<organism>
    <name type="scientific">Brucella ovis (strain ATCC 25840 / 63/290 / NCTC 10512)</name>
    <dbReference type="NCBI Taxonomy" id="444178"/>
    <lineage>
        <taxon>Bacteria</taxon>
        <taxon>Pseudomonadati</taxon>
        <taxon>Pseudomonadota</taxon>
        <taxon>Alphaproteobacteria</taxon>
        <taxon>Hyphomicrobiales</taxon>
        <taxon>Brucellaceae</taxon>
        <taxon>Brucella/Ochrobactrum group</taxon>
        <taxon>Brucella</taxon>
    </lineage>
</organism>
<keyword id="KW-0963">Cytoplasm</keyword>
<keyword id="KW-0251">Elongation factor</keyword>
<keyword id="KW-0648">Protein biosynthesis</keyword>